<geneLocation type="mitochondrion"/>
<sequence>MDSLTIVPPALLIISILMAVAFLTALERKIMGHMQLRKGPNIVGPLGLLQPFADGLKLITKELTLPLLATPTLFILAPTAALMLALAMWSPLPMPSPLADLNLGLLLLLAMSSLMVYSFLWSGWSSNSKYALMGAMRAVAQTISYEVTLAIIVLSIVLLSGGFSLHTLTVTQEPLYLALATWPSMMMWYTSTLAETNRAPFDLTEGESELVSGFNVEYSASPFALFFLAEYANIMLMNTLTTTLFLSPSTPTFLPALFTIALMSKALLLTMSFLWVRASYPRFRYDQLMHLLWKNFLPMTLTLCLWHSSVPMSMFGLPPMT</sequence>
<keyword id="KW-0249">Electron transport</keyword>
<keyword id="KW-0472">Membrane</keyword>
<keyword id="KW-0496">Mitochondrion</keyword>
<keyword id="KW-0999">Mitochondrion inner membrane</keyword>
<keyword id="KW-0520">NAD</keyword>
<keyword id="KW-0679">Respiratory chain</keyword>
<keyword id="KW-1278">Translocase</keyword>
<keyword id="KW-0812">Transmembrane</keyword>
<keyword id="KW-1133">Transmembrane helix</keyword>
<keyword id="KW-0813">Transport</keyword>
<keyword id="KW-0830">Ubiquinone</keyword>
<comment type="function">
    <text evidence="1">Core subunit of the mitochondrial membrane respiratory chain NADH dehydrogenase (Complex I) that is believed to belong to the minimal assembly required for catalysis. Complex I functions in the transfer of electrons from NADH to the respiratory chain. The immediate electron acceptor for the enzyme is believed to be ubiquinone (By similarity).</text>
</comment>
<comment type="catalytic activity">
    <reaction>
        <text>a ubiquinone + NADH + 5 H(+)(in) = a ubiquinol + NAD(+) + 4 H(+)(out)</text>
        <dbReference type="Rhea" id="RHEA:29091"/>
        <dbReference type="Rhea" id="RHEA-COMP:9565"/>
        <dbReference type="Rhea" id="RHEA-COMP:9566"/>
        <dbReference type="ChEBI" id="CHEBI:15378"/>
        <dbReference type="ChEBI" id="CHEBI:16389"/>
        <dbReference type="ChEBI" id="CHEBI:17976"/>
        <dbReference type="ChEBI" id="CHEBI:57540"/>
        <dbReference type="ChEBI" id="CHEBI:57945"/>
        <dbReference type="EC" id="7.1.1.2"/>
    </reaction>
</comment>
<comment type="subcellular location">
    <subcellularLocation>
        <location evidence="1">Mitochondrion inner membrane</location>
        <topology evidence="1">Multi-pass membrane protein</topology>
    </subcellularLocation>
</comment>
<comment type="similarity">
    <text evidence="3">Belongs to the complex I subunit 1 family.</text>
</comment>
<reference key="1">
    <citation type="journal article" date="1997" name="Mol. Biol. Evol.">
        <title>The complete mitochondrial genome of Alligator mississippiensis and the separation between recent archosauria (birds and crocodiles).</title>
        <authorList>
            <person name="Janke A."/>
            <person name="Arnason U."/>
        </authorList>
    </citation>
    <scope>NUCLEOTIDE SEQUENCE [GENOMIC DNA]</scope>
    <source>
        <tissue>Liver</tissue>
    </source>
</reference>
<reference key="2">
    <citation type="submission" date="1998-06" db="EMBL/GenBank/DDBJ databases">
        <title>Primers for a PCR-based approach to complete mitochondrial genome sequencing.</title>
        <authorList>
            <person name="Sorenson M.D."/>
            <person name="Dimcheff D.E."/>
            <person name="Ast J.C."/>
            <person name="Yuri T."/>
            <person name="Mindell D.P."/>
        </authorList>
    </citation>
    <scope>NUCLEOTIDE SEQUENCE [GENOMIC DNA]</scope>
</reference>
<proteinExistence type="inferred from homology"/>
<dbReference type="EC" id="7.1.1.2"/>
<dbReference type="EMBL" id="Y13113">
    <property type="protein sequence ID" value="CAA73561.1"/>
    <property type="molecule type" value="Genomic_DNA"/>
</dbReference>
<dbReference type="EMBL" id="AF069428">
    <property type="protein sequence ID" value="AAD09980.1"/>
    <property type="molecule type" value="Genomic_DNA"/>
</dbReference>
<dbReference type="PIR" id="T11274">
    <property type="entry name" value="T11274"/>
</dbReference>
<dbReference type="RefSeq" id="NP_007562.1">
    <property type="nucleotide sequence ID" value="NC_001922.1"/>
</dbReference>
<dbReference type="SMR" id="O47868"/>
<dbReference type="GeneID" id="808237"/>
<dbReference type="KEGG" id="amj:808237"/>
<dbReference type="CTD" id="4535"/>
<dbReference type="OrthoDB" id="531329at2759"/>
<dbReference type="GO" id="GO:0005743">
    <property type="term" value="C:mitochondrial inner membrane"/>
    <property type="evidence" value="ECO:0007669"/>
    <property type="project" value="UniProtKB-SubCell"/>
</dbReference>
<dbReference type="GO" id="GO:0008137">
    <property type="term" value="F:NADH dehydrogenase (ubiquinone) activity"/>
    <property type="evidence" value="ECO:0007669"/>
    <property type="project" value="UniProtKB-EC"/>
</dbReference>
<dbReference type="GO" id="GO:0009060">
    <property type="term" value="P:aerobic respiration"/>
    <property type="evidence" value="ECO:0007669"/>
    <property type="project" value="TreeGrafter"/>
</dbReference>
<dbReference type="HAMAP" id="MF_01350">
    <property type="entry name" value="NDH1_NuoH"/>
    <property type="match status" value="1"/>
</dbReference>
<dbReference type="InterPro" id="IPR001694">
    <property type="entry name" value="NADH_UbQ_OxRdtase_su1/FPO"/>
</dbReference>
<dbReference type="InterPro" id="IPR018086">
    <property type="entry name" value="NADH_UbQ_OxRdtase_su1_CS"/>
</dbReference>
<dbReference type="PANTHER" id="PTHR11432">
    <property type="entry name" value="NADH DEHYDROGENASE SUBUNIT 1"/>
    <property type="match status" value="1"/>
</dbReference>
<dbReference type="PANTHER" id="PTHR11432:SF3">
    <property type="entry name" value="NADH-UBIQUINONE OXIDOREDUCTASE CHAIN 1"/>
    <property type="match status" value="1"/>
</dbReference>
<dbReference type="Pfam" id="PF00146">
    <property type="entry name" value="NADHdh"/>
    <property type="match status" value="1"/>
</dbReference>
<dbReference type="PROSITE" id="PS00667">
    <property type="entry name" value="COMPLEX1_ND1_1"/>
    <property type="match status" value="1"/>
</dbReference>
<dbReference type="PROSITE" id="PS00668">
    <property type="entry name" value="COMPLEX1_ND1_2"/>
    <property type="match status" value="1"/>
</dbReference>
<gene>
    <name type="primary">MT-ND1</name>
    <name type="synonym">MTND1</name>
    <name type="synonym">NADH1</name>
    <name type="synonym">ND1</name>
</gene>
<evidence type="ECO:0000250" key="1"/>
<evidence type="ECO:0000255" key="2"/>
<evidence type="ECO:0000305" key="3"/>
<organism>
    <name type="scientific">Alligator mississippiensis</name>
    <name type="common">American alligator</name>
    <dbReference type="NCBI Taxonomy" id="8496"/>
    <lineage>
        <taxon>Eukaryota</taxon>
        <taxon>Metazoa</taxon>
        <taxon>Chordata</taxon>
        <taxon>Craniata</taxon>
        <taxon>Vertebrata</taxon>
        <taxon>Euteleostomi</taxon>
        <taxon>Archelosauria</taxon>
        <taxon>Archosauria</taxon>
        <taxon>Crocodylia</taxon>
        <taxon>Alligatoridae</taxon>
        <taxon>Alligatorinae</taxon>
        <taxon>Alligator</taxon>
    </lineage>
</organism>
<protein>
    <recommendedName>
        <fullName>NADH-ubiquinone oxidoreductase chain 1</fullName>
        <ecNumber>7.1.1.2</ecNumber>
    </recommendedName>
    <alternativeName>
        <fullName>NADH dehydrogenase subunit 1</fullName>
    </alternativeName>
</protein>
<name>NU1M_ALLMI</name>
<accession>O47868</accession>
<feature type="chain" id="PRO_0000117339" description="NADH-ubiquinone oxidoreductase chain 1">
    <location>
        <begin position="1"/>
        <end position="321"/>
    </location>
</feature>
<feature type="transmembrane region" description="Helical" evidence="2">
    <location>
        <begin position="6"/>
        <end position="26"/>
    </location>
</feature>
<feature type="transmembrane region" description="Helical" evidence="2">
    <location>
        <begin position="67"/>
        <end position="87"/>
    </location>
</feature>
<feature type="transmembrane region" description="Helical" evidence="2">
    <location>
        <begin position="103"/>
        <end position="123"/>
    </location>
</feature>
<feature type="transmembrane region" description="Helical" evidence="2">
    <location>
        <begin position="143"/>
        <end position="163"/>
    </location>
</feature>
<feature type="transmembrane region" description="Helical" evidence="2">
    <location>
        <begin position="174"/>
        <end position="194"/>
    </location>
</feature>
<feature type="transmembrane region" description="Helical" evidence="2">
    <location>
        <begin position="220"/>
        <end position="240"/>
    </location>
</feature>
<feature type="transmembrane region" description="Helical" evidence="2">
    <location>
        <begin position="256"/>
        <end position="276"/>
    </location>
</feature>
<feature type="transmembrane region" description="Helical" evidence="2">
    <location>
        <begin position="296"/>
        <end position="316"/>
    </location>
</feature>